<keyword id="KW-0998">Cell outer membrane</keyword>
<keyword id="KW-0133">Cell shape</keyword>
<keyword id="KW-0449">Lipoprotein</keyword>
<keyword id="KW-0472">Membrane</keyword>
<keyword id="KW-0564">Palmitate</keyword>
<keyword id="KW-0573">Peptidoglycan synthesis</keyword>
<keyword id="KW-1185">Reference proteome</keyword>
<keyword id="KW-0732">Signal</keyword>
<sequence length="583" mass="65072">MATILKQKLKTFFVPTAITLLLSACNSTSLFENSVTYLIKQEAYASSEFYINKAEQTLNSQDKITYQLLAVRKLIDENKVVEAQNTLNDLTTRLNIMEQNPLQQLEYQLVTAQLAALKGNNHQAEVTLQHISAANLSHSQLLRFYQTQAKIAENSKNTIEAVRIRSLIATQLVDNKLRQENNDKIWSLLRNANRGMLSSAQAGAGEMELAGWLALIEIYNQSVSTPAQMPQNINYWKRLYPNHSALAVMPTELQRVFNFQQTLLNNVALLLPLSGDAKILGEIIKKGFDDAKEQDPTIVQVFDTDSNSIENILMQAKQQGAQMIIGPLLKSRVNQMLASDQIRDINVLALNATQDVKPIVGVCYYGLSPEAEARSGADRLSRDGYTKAIVVAARDEFGQRSAEAFAQRWRQLTNTDADIRYYNQPLDVITTIQNSANNLQETALYALGNAEQLLEIKQGLENSTIAGQLAIYTASRSNSPNNGIEFRTAMEGVKFSEIPLLADHNSNEYQKAYSLADSDFSMMRLYAMGSDTWALANKFNEFRQIPGYSISGLTGNLNAGPNCNIERNMTWLQYHNGAVETTN</sequence>
<comment type="function">
    <text evidence="1">Regulator of peptidoglycan synthesis that is essential for the function of penicillin-binding protein 1A (PBP1a).</text>
</comment>
<comment type="subunit">
    <text evidence="1">Interacts with PBP1a.</text>
</comment>
<comment type="subcellular location">
    <subcellularLocation>
        <location evidence="1">Cell outer membrane</location>
        <topology evidence="1">Lipid-anchor</topology>
        <orientation evidence="1">Periplasmic side</orientation>
    </subcellularLocation>
</comment>
<comment type="similarity">
    <text evidence="1">Belongs to the LpoA family.</text>
</comment>
<gene>
    <name evidence="1" type="primary">lpoA</name>
    <name type="synonym">lppC</name>
    <name type="ordered locus">HD_0803</name>
</gene>
<protein>
    <recommendedName>
        <fullName evidence="1">Penicillin-binding protein activator LpoA</fullName>
        <shortName evidence="1">PBP activator LpoA</shortName>
    </recommendedName>
</protein>
<dbReference type="EMBL" id="AE017143">
    <property type="protein sequence ID" value="AAP95703.1"/>
    <property type="molecule type" value="Genomic_DNA"/>
</dbReference>
<dbReference type="RefSeq" id="WP_010944753.1">
    <property type="nucleotide sequence ID" value="NC_002940.2"/>
</dbReference>
<dbReference type="SMR" id="Q7VMZ8"/>
<dbReference type="STRING" id="233412.HD_0803"/>
<dbReference type="KEGG" id="hdu:HD_0803"/>
<dbReference type="eggNOG" id="COG3107">
    <property type="taxonomic scope" value="Bacteria"/>
</dbReference>
<dbReference type="HOGENOM" id="CLU_026091_1_1_6"/>
<dbReference type="OrthoDB" id="6708821at2"/>
<dbReference type="Proteomes" id="UP000001022">
    <property type="component" value="Chromosome"/>
</dbReference>
<dbReference type="GO" id="GO:0031241">
    <property type="term" value="C:periplasmic side of cell outer membrane"/>
    <property type="evidence" value="ECO:0007669"/>
    <property type="project" value="UniProtKB-UniRule"/>
</dbReference>
<dbReference type="GO" id="GO:0030234">
    <property type="term" value="F:enzyme regulator activity"/>
    <property type="evidence" value="ECO:0007669"/>
    <property type="project" value="UniProtKB-UniRule"/>
</dbReference>
<dbReference type="GO" id="GO:0009252">
    <property type="term" value="P:peptidoglycan biosynthetic process"/>
    <property type="evidence" value="ECO:0007669"/>
    <property type="project" value="UniProtKB-UniRule"/>
</dbReference>
<dbReference type="GO" id="GO:0008360">
    <property type="term" value="P:regulation of cell shape"/>
    <property type="evidence" value="ECO:0007669"/>
    <property type="project" value="UniProtKB-KW"/>
</dbReference>
<dbReference type="CDD" id="cd06339">
    <property type="entry name" value="PBP1_YraM_LppC_lipoprotein-like"/>
    <property type="match status" value="1"/>
</dbReference>
<dbReference type="Gene3D" id="1.25.40.650">
    <property type="match status" value="1"/>
</dbReference>
<dbReference type="Gene3D" id="3.40.50.2300">
    <property type="match status" value="2"/>
</dbReference>
<dbReference type="Gene3D" id="1.25.40.10">
    <property type="entry name" value="Tetratricopeptide repeat domain"/>
    <property type="match status" value="1"/>
</dbReference>
<dbReference type="HAMAP" id="MF_01890">
    <property type="entry name" value="LpoA"/>
    <property type="match status" value="1"/>
</dbReference>
<dbReference type="InterPro" id="IPR007443">
    <property type="entry name" value="LpoA"/>
</dbReference>
<dbReference type="InterPro" id="IPR028082">
    <property type="entry name" value="Peripla_BP_I"/>
</dbReference>
<dbReference type="InterPro" id="IPR011990">
    <property type="entry name" value="TPR-like_helical_dom_sf"/>
</dbReference>
<dbReference type="PANTHER" id="PTHR38038">
    <property type="entry name" value="PENICILLIN-BINDING PROTEIN ACTIVATOR LPOA"/>
    <property type="match status" value="1"/>
</dbReference>
<dbReference type="PANTHER" id="PTHR38038:SF1">
    <property type="entry name" value="PENICILLIN-BINDING PROTEIN ACTIVATOR LPOA"/>
    <property type="match status" value="1"/>
</dbReference>
<dbReference type="Pfam" id="PF04348">
    <property type="entry name" value="LppC"/>
    <property type="match status" value="1"/>
</dbReference>
<dbReference type="SUPFAM" id="SSF53822">
    <property type="entry name" value="Periplasmic binding protein-like I"/>
    <property type="match status" value="1"/>
</dbReference>
<dbReference type="PROSITE" id="PS51257">
    <property type="entry name" value="PROKAR_LIPOPROTEIN"/>
    <property type="match status" value="1"/>
</dbReference>
<reference key="1">
    <citation type="submission" date="2003-06" db="EMBL/GenBank/DDBJ databases">
        <title>The complete genome sequence of Haemophilus ducreyi.</title>
        <authorList>
            <person name="Munson R.S. Jr."/>
            <person name="Ray W.C."/>
            <person name="Mahairas G."/>
            <person name="Sabo P."/>
            <person name="Mungur R."/>
            <person name="Johnson L."/>
            <person name="Nguyen D."/>
            <person name="Wang J."/>
            <person name="Forst C."/>
            <person name="Hood L."/>
        </authorList>
    </citation>
    <scope>NUCLEOTIDE SEQUENCE [LARGE SCALE GENOMIC DNA]</scope>
    <source>
        <strain>35000HP / ATCC 700724</strain>
    </source>
</reference>
<organism>
    <name type="scientific">Haemophilus ducreyi (strain 35000HP / ATCC 700724)</name>
    <dbReference type="NCBI Taxonomy" id="233412"/>
    <lineage>
        <taxon>Bacteria</taxon>
        <taxon>Pseudomonadati</taxon>
        <taxon>Pseudomonadota</taxon>
        <taxon>Gammaproteobacteria</taxon>
        <taxon>Pasteurellales</taxon>
        <taxon>Pasteurellaceae</taxon>
        <taxon>Haemophilus</taxon>
    </lineage>
</organism>
<accession>Q7VMZ8</accession>
<name>LPOA_HAEDU</name>
<evidence type="ECO:0000255" key="1">
    <source>
        <dbReference type="HAMAP-Rule" id="MF_01890"/>
    </source>
</evidence>
<feature type="signal peptide" evidence="1">
    <location>
        <begin position="1"/>
        <end position="24"/>
    </location>
</feature>
<feature type="chain" id="PRO_0000405933" description="Penicillin-binding protein activator LpoA">
    <location>
        <begin position="25"/>
        <end position="583"/>
    </location>
</feature>
<feature type="lipid moiety-binding region" description="N-palmitoyl cysteine" evidence="1">
    <location>
        <position position="25"/>
    </location>
</feature>
<feature type="lipid moiety-binding region" description="S-diacylglycerol cysteine" evidence="1">
    <location>
        <position position="25"/>
    </location>
</feature>
<proteinExistence type="inferred from homology"/>